<reference key="1">
    <citation type="journal article" date="2004" name="Nucleic Acids Res.">
        <title>Whole genome comparisons of serotype 4b and 1/2a strains of the food-borne pathogen Listeria monocytogenes reveal new insights into the core genome components of this species.</title>
        <authorList>
            <person name="Nelson K.E."/>
            <person name="Fouts D.E."/>
            <person name="Mongodin E.F."/>
            <person name="Ravel J."/>
            <person name="DeBoy R.T."/>
            <person name="Kolonay J.F."/>
            <person name="Rasko D.A."/>
            <person name="Angiuoli S.V."/>
            <person name="Gill S.R."/>
            <person name="Paulsen I.T."/>
            <person name="Peterson J.D."/>
            <person name="White O."/>
            <person name="Nelson W.C."/>
            <person name="Nierman W.C."/>
            <person name="Beanan M.J."/>
            <person name="Brinkac L.M."/>
            <person name="Daugherty S.C."/>
            <person name="Dodson R.J."/>
            <person name="Durkin A.S."/>
            <person name="Madupu R."/>
            <person name="Haft D.H."/>
            <person name="Selengut J."/>
            <person name="Van Aken S.E."/>
            <person name="Khouri H.M."/>
            <person name="Fedorova N."/>
            <person name="Forberger H.A."/>
            <person name="Tran B."/>
            <person name="Kathariou S."/>
            <person name="Wonderling L.D."/>
            <person name="Uhlich G.A."/>
            <person name="Bayles D.O."/>
            <person name="Luchansky J.B."/>
            <person name="Fraser C.M."/>
        </authorList>
    </citation>
    <scope>NUCLEOTIDE SEQUENCE [LARGE SCALE GENOMIC DNA]</scope>
    <source>
        <strain>F2365</strain>
    </source>
</reference>
<accession>Q71ZN5</accession>
<evidence type="ECO:0000255" key="1">
    <source>
        <dbReference type="HAMAP-Rule" id="MF_00418"/>
    </source>
</evidence>
<evidence type="ECO:0000305" key="2"/>
<protein>
    <recommendedName>
        <fullName evidence="1">4-hydroxy-tetrahydrodipicolinate synthase</fullName>
        <shortName evidence="1">HTPA synthase</shortName>
        <ecNumber evidence="1">4.3.3.7</ecNumber>
    </recommendedName>
</protein>
<dbReference type="EC" id="4.3.3.7" evidence="1"/>
<dbReference type="EMBL" id="AE017262">
    <property type="protein sequence ID" value="AAT04229.1"/>
    <property type="molecule type" value="Genomic_DNA"/>
</dbReference>
<dbReference type="RefSeq" id="WP_003725378.1">
    <property type="nucleotide sequence ID" value="NC_002973.6"/>
</dbReference>
<dbReference type="SMR" id="Q71ZN5"/>
<dbReference type="KEGG" id="lmf:LMOf2365_1454"/>
<dbReference type="HOGENOM" id="CLU_049343_7_1_9"/>
<dbReference type="UniPathway" id="UPA00034">
    <property type="reaction ID" value="UER00017"/>
</dbReference>
<dbReference type="GO" id="GO:0005829">
    <property type="term" value="C:cytosol"/>
    <property type="evidence" value="ECO:0007669"/>
    <property type="project" value="TreeGrafter"/>
</dbReference>
<dbReference type="GO" id="GO:0008840">
    <property type="term" value="F:4-hydroxy-tetrahydrodipicolinate synthase activity"/>
    <property type="evidence" value="ECO:0007669"/>
    <property type="project" value="UniProtKB-UniRule"/>
</dbReference>
<dbReference type="GO" id="GO:0019877">
    <property type="term" value="P:diaminopimelate biosynthetic process"/>
    <property type="evidence" value="ECO:0007669"/>
    <property type="project" value="UniProtKB-UniRule"/>
</dbReference>
<dbReference type="GO" id="GO:0009089">
    <property type="term" value="P:lysine biosynthetic process via diaminopimelate"/>
    <property type="evidence" value="ECO:0007669"/>
    <property type="project" value="UniProtKB-UniRule"/>
</dbReference>
<dbReference type="CDD" id="cd00950">
    <property type="entry name" value="DHDPS"/>
    <property type="match status" value="1"/>
</dbReference>
<dbReference type="Gene3D" id="3.20.20.70">
    <property type="entry name" value="Aldolase class I"/>
    <property type="match status" value="1"/>
</dbReference>
<dbReference type="HAMAP" id="MF_00418">
    <property type="entry name" value="DapA"/>
    <property type="match status" value="1"/>
</dbReference>
<dbReference type="InterPro" id="IPR013785">
    <property type="entry name" value="Aldolase_TIM"/>
</dbReference>
<dbReference type="InterPro" id="IPR005263">
    <property type="entry name" value="DapA"/>
</dbReference>
<dbReference type="InterPro" id="IPR002220">
    <property type="entry name" value="DapA-like"/>
</dbReference>
<dbReference type="InterPro" id="IPR020625">
    <property type="entry name" value="Schiff_base-form_aldolases_AS"/>
</dbReference>
<dbReference type="InterPro" id="IPR020624">
    <property type="entry name" value="Schiff_base-form_aldolases_CS"/>
</dbReference>
<dbReference type="NCBIfam" id="TIGR00674">
    <property type="entry name" value="dapA"/>
    <property type="match status" value="1"/>
</dbReference>
<dbReference type="PANTHER" id="PTHR12128:SF66">
    <property type="entry name" value="4-HYDROXY-2-OXOGLUTARATE ALDOLASE, MITOCHONDRIAL"/>
    <property type="match status" value="1"/>
</dbReference>
<dbReference type="PANTHER" id="PTHR12128">
    <property type="entry name" value="DIHYDRODIPICOLINATE SYNTHASE"/>
    <property type="match status" value="1"/>
</dbReference>
<dbReference type="Pfam" id="PF00701">
    <property type="entry name" value="DHDPS"/>
    <property type="match status" value="1"/>
</dbReference>
<dbReference type="PIRSF" id="PIRSF001365">
    <property type="entry name" value="DHDPS"/>
    <property type="match status" value="1"/>
</dbReference>
<dbReference type="PRINTS" id="PR00146">
    <property type="entry name" value="DHPICSNTHASE"/>
</dbReference>
<dbReference type="SMART" id="SM01130">
    <property type="entry name" value="DHDPS"/>
    <property type="match status" value="1"/>
</dbReference>
<dbReference type="SUPFAM" id="SSF51569">
    <property type="entry name" value="Aldolase"/>
    <property type="match status" value="1"/>
</dbReference>
<dbReference type="PROSITE" id="PS00665">
    <property type="entry name" value="DHDPS_1"/>
    <property type="match status" value="1"/>
</dbReference>
<dbReference type="PROSITE" id="PS00666">
    <property type="entry name" value="DHDPS_2"/>
    <property type="match status" value="1"/>
</dbReference>
<sequence length="293" mass="31420">MDLGKVITAMVTPIHPEKDKVCKKRIHHLVNHLIKNGSDGLVIAGTTGESPTLSHDEKIKLFRQVIETNDGRAKLIAGTGSNNTAETIAFTKEVAELGGIDAVLIVAPYYNKPNQDGLYAHFAAVSEASDLPVVIYNIPGRSVVNIEPETIIRLAKLPNIVGVKESSGNLDNISKIIAETSDDFQVYSGDDSLTLPILAVGGNGVISVASHVVGNEMQEMIQAFERGEVQKAAQIHRELLPLMNGLFSVPNPAPTKYLLNQQGISVGPVRLPLVDLNAEQGTKLQAILEGLSK</sequence>
<proteinExistence type="inferred from homology"/>
<name>DAPA_LISMF</name>
<keyword id="KW-0028">Amino-acid biosynthesis</keyword>
<keyword id="KW-0963">Cytoplasm</keyword>
<keyword id="KW-0220">Diaminopimelate biosynthesis</keyword>
<keyword id="KW-0456">Lyase</keyword>
<keyword id="KW-0457">Lysine biosynthesis</keyword>
<keyword id="KW-0704">Schiff base</keyword>
<feature type="chain" id="PRO_0000103124" description="4-hydroxy-tetrahydrodipicolinate synthase">
    <location>
        <begin position="1"/>
        <end position="293"/>
    </location>
</feature>
<feature type="active site" description="Proton donor/acceptor" evidence="1">
    <location>
        <position position="136"/>
    </location>
</feature>
<feature type="active site" description="Schiff-base intermediate with substrate" evidence="1">
    <location>
        <position position="164"/>
    </location>
</feature>
<feature type="binding site" evidence="1">
    <location>
        <position position="47"/>
    </location>
    <ligand>
        <name>pyruvate</name>
        <dbReference type="ChEBI" id="CHEBI:15361"/>
    </ligand>
</feature>
<feature type="binding site" evidence="1">
    <location>
        <position position="206"/>
    </location>
    <ligand>
        <name>pyruvate</name>
        <dbReference type="ChEBI" id="CHEBI:15361"/>
    </ligand>
</feature>
<feature type="site" description="Part of a proton relay during catalysis" evidence="1">
    <location>
        <position position="46"/>
    </location>
</feature>
<feature type="site" description="Part of a proton relay during catalysis" evidence="1">
    <location>
        <position position="110"/>
    </location>
</feature>
<organism>
    <name type="scientific">Listeria monocytogenes serotype 4b (strain F2365)</name>
    <dbReference type="NCBI Taxonomy" id="265669"/>
    <lineage>
        <taxon>Bacteria</taxon>
        <taxon>Bacillati</taxon>
        <taxon>Bacillota</taxon>
        <taxon>Bacilli</taxon>
        <taxon>Bacillales</taxon>
        <taxon>Listeriaceae</taxon>
        <taxon>Listeria</taxon>
    </lineage>
</organism>
<gene>
    <name evidence="1" type="primary">dapA</name>
    <name type="ordered locus">LMOf2365_1454</name>
</gene>
<comment type="function">
    <text evidence="1">Catalyzes the condensation of (S)-aspartate-beta-semialdehyde [(S)-ASA] and pyruvate to 4-hydroxy-tetrahydrodipicolinate (HTPA).</text>
</comment>
<comment type="catalytic activity">
    <reaction evidence="1">
        <text>L-aspartate 4-semialdehyde + pyruvate = (2S,4S)-4-hydroxy-2,3,4,5-tetrahydrodipicolinate + H2O + H(+)</text>
        <dbReference type="Rhea" id="RHEA:34171"/>
        <dbReference type="ChEBI" id="CHEBI:15361"/>
        <dbReference type="ChEBI" id="CHEBI:15377"/>
        <dbReference type="ChEBI" id="CHEBI:15378"/>
        <dbReference type="ChEBI" id="CHEBI:67139"/>
        <dbReference type="ChEBI" id="CHEBI:537519"/>
        <dbReference type="EC" id="4.3.3.7"/>
    </reaction>
</comment>
<comment type="pathway">
    <text evidence="1">Amino-acid biosynthesis; L-lysine biosynthesis via DAP pathway; (S)-tetrahydrodipicolinate from L-aspartate: step 3/4.</text>
</comment>
<comment type="subunit">
    <text evidence="1">Homotetramer; dimer of dimers.</text>
</comment>
<comment type="subcellular location">
    <subcellularLocation>
        <location evidence="1">Cytoplasm</location>
    </subcellularLocation>
</comment>
<comment type="similarity">
    <text evidence="1">Belongs to the DapA family.</text>
</comment>
<comment type="caution">
    <text evidence="2">Was originally thought to be a dihydrodipicolinate synthase (DHDPS), catalyzing the condensation of (S)-aspartate-beta-semialdehyde [(S)-ASA] and pyruvate to dihydrodipicolinate (DHDP). However, it was shown in E.coli that the product of the enzymatic reaction is not dihydrodipicolinate but in fact (4S)-4-hydroxy-2,3,4,5-tetrahydro-(2S)-dipicolinic acid (HTPA), and that the consecutive dehydration reaction leading to DHDP is not spontaneous but catalyzed by DapB.</text>
</comment>